<sequence>MKIRPLHDRVVVRRLEEERTSAGGIVIPDSAAEKPSRGEVISVGPGKPLDNGEVRSLDVKVGDQILFGKYAGTEVKLAGDEYIVMREDDIMGVIEK</sequence>
<reference key="1">
    <citation type="journal article" date="1988" name="J. Bacteriol.">
        <title>A heat shock operon in Coxiella burnetti produces a major antigen homologous to a protein in both mycobacteria and Escherichia coli.</title>
        <authorList>
            <person name="Vodkin M.H."/>
            <person name="Williams J.C."/>
        </authorList>
    </citation>
    <scope>NUCLEOTIDE SEQUENCE [GENOMIC DNA]</scope>
</reference>
<reference key="2">
    <citation type="journal article" date="2003" name="Proc. Natl. Acad. Sci. U.S.A.">
        <title>Complete genome sequence of the Q-fever pathogen, Coxiella burnetii.</title>
        <authorList>
            <person name="Seshadri R."/>
            <person name="Paulsen I.T."/>
            <person name="Eisen J.A."/>
            <person name="Read T.D."/>
            <person name="Nelson K.E."/>
            <person name="Nelson W.C."/>
            <person name="Ward N.L."/>
            <person name="Tettelin H."/>
            <person name="Davidsen T.M."/>
            <person name="Beanan M.J."/>
            <person name="DeBoy R.T."/>
            <person name="Daugherty S.C."/>
            <person name="Brinkac L.M."/>
            <person name="Madupu R."/>
            <person name="Dodson R.J."/>
            <person name="Khouri H.M."/>
            <person name="Lee K.H."/>
            <person name="Carty H.A."/>
            <person name="Scanlan D."/>
            <person name="Heinzen R.A."/>
            <person name="Thompson H.A."/>
            <person name="Samuel J.E."/>
            <person name="Fraser C.M."/>
            <person name="Heidelberg J.F."/>
        </authorList>
    </citation>
    <scope>NUCLEOTIDE SEQUENCE [LARGE SCALE GENOMIC DNA]</scope>
    <source>
        <strain>RSA 493 / Nine Mile phase I</strain>
    </source>
</reference>
<dbReference type="EMBL" id="M20482">
    <property type="protein sequence ID" value="AAA23308.1"/>
    <property type="molecule type" value="Genomic_DNA"/>
</dbReference>
<dbReference type="EMBL" id="AE016828">
    <property type="protein sequence ID" value="AAO91214.2"/>
    <property type="status" value="ALT_INIT"/>
    <property type="molecule type" value="Genomic_DNA"/>
</dbReference>
<dbReference type="PIR" id="S39764">
    <property type="entry name" value="S39764"/>
</dbReference>
<dbReference type="RefSeq" id="NP_820700.3">
    <property type="nucleotide sequence ID" value="NC_002971.4"/>
</dbReference>
<dbReference type="RefSeq" id="WP_005770495.1">
    <property type="nucleotide sequence ID" value="NZ_CDBG01000001.1"/>
</dbReference>
<dbReference type="SMR" id="P19422"/>
<dbReference type="STRING" id="227377.CBU_1719"/>
<dbReference type="EnsemblBacteria" id="AAO91214">
    <property type="protein sequence ID" value="AAO91214"/>
    <property type="gene ID" value="CBU_1719"/>
</dbReference>
<dbReference type="GeneID" id="1209630"/>
<dbReference type="PATRIC" id="fig|227377.7.peg.1704"/>
<dbReference type="eggNOG" id="COG0234">
    <property type="taxonomic scope" value="Bacteria"/>
</dbReference>
<dbReference type="HOGENOM" id="CLU_132825_2_0_6"/>
<dbReference type="OrthoDB" id="9806791at2"/>
<dbReference type="Proteomes" id="UP000002671">
    <property type="component" value="Chromosome"/>
</dbReference>
<dbReference type="GO" id="GO:0005737">
    <property type="term" value="C:cytoplasm"/>
    <property type="evidence" value="ECO:0007669"/>
    <property type="project" value="UniProtKB-SubCell"/>
</dbReference>
<dbReference type="GO" id="GO:0005524">
    <property type="term" value="F:ATP binding"/>
    <property type="evidence" value="ECO:0007669"/>
    <property type="project" value="InterPro"/>
</dbReference>
<dbReference type="GO" id="GO:0046872">
    <property type="term" value="F:metal ion binding"/>
    <property type="evidence" value="ECO:0000318"/>
    <property type="project" value="GO_Central"/>
</dbReference>
<dbReference type="GO" id="GO:0044183">
    <property type="term" value="F:protein folding chaperone"/>
    <property type="evidence" value="ECO:0007669"/>
    <property type="project" value="InterPro"/>
</dbReference>
<dbReference type="GO" id="GO:0051087">
    <property type="term" value="F:protein-folding chaperone binding"/>
    <property type="evidence" value="ECO:0000318"/>
    <property type="project" value="GO_Central"/>
</dbReference>
<dbReference type="GO" id="GO:0051082">
    <property type="term" value="F:unfolded protein binding"/>
    <property type="evidence" value="ECO:0000318"/>
    <property type="project" value="GO_Central"/>
</dbReference>
<dbReference type="GO" id="GO:0051085">
    <property type="term" value="P:chaperone cofactor-dependent protein refolding"/>
    <property type="evidence" value="ECO:0000318"/>
    <property type="project" value="GO_Central"/>
</dbReference>
<dbReference type="CDD" id="cd00320">
    <property type="entry name" value="cpn10"/>
    <property type="match status" value="1"/>
</dbReference>
<dbReference type="FunFam" id="2.30.33.40:FF:000001">
    <property type="entry name" value="10 kDa chaperonin"/>
    <property type="match status" value="1"/>
</dbReference>
<dbReference type="Gene3D" id="2.30.33.40">
    <property type="entry name" value="GroES chaperonin"/>
    <property type="match status" value="1"/>
</dbReference>
<dbReference type="HAMAP" id="MF_00580">
    <property type="entry name" value="CH10"/>
    <property type="match status" value="1"/>
</dbReference>
<dbReference type="InterPro" id="IPR020818">
    <property type="entry name" value="Chaperonin_GroES"/>
</dbReference>
<dbReference type="InterPro" id="IPR037124">
    <property type="entry name" value="Chaperonin_GroES_sf"/>
</dbReference>
<dbReference type="InterPro" id="IPR018369">
    <property type="entry name" value="Chaprnonin_Cpn10_CS"/>
</dbReference>
<dbReference type="InterPro" id="IPR011032">
    <property type="entry name" value="GroES-like_sf"/>
</dbReference>
<dbReference type="NCBIfam" id="NF001527">
    <property type="entry name" value="PRK00364.1-2"/>
    <property type="match status" value="1"/>
</dbReference>
<dbReference type="NCBIfam" id="NF001529">
    <property type="entry name" value="PRK00364.1-5"/>
    <property type="match status" value="1"/>
</dbReference>
<dbReference type="NCBIfam" id="NF001531">
    <property type="entry name" value="PRK00364.2-2"/>
    <property type="match status" value="1"/>
</dbReference>
<dbReference type="NCBIfam" id="NF001533">
    <property type="entry name" value="PRK00364.2-4"/>
    <property type="match status" value="1"/>
</dbReference>
<dbReference type="NCBIfam" id="NF001534">
    <property type="entry name" value="PRK00364.2-5"/>
    <property type="match status" value="1"/>
</dbReference>
<dbReference type="PANTHER" id="PTHR10772">
    <property type="entry name" value="10 KDA HEAT SHOCK PROTEIN"/>
    <property type="match status" value="1"/>
</dbReference>
<dbReference type="PANTHER" id="PTHR10772:SF58">
    <property type="entry name" value="CO-CHAPERONIN GROES"/>
    <property type="match status" value="1"/>
</dbReference>
<dbReference type="Pfam" id="PF00166">
    <property type="entry name" value="Cpn10"/>
    <property type="match status" value="1"/>
</dbReference>
<dbReference type="PRINTS" id="PR00297">
    <property type="entry name" value="CHAPERONIN10"/>
</dbReference>
<dbReference type="SMART" id="SM00883">
    <property type="entry name" value="Cpn10"/>
    <property type="match status" value="1"/>
</dbReference>
<dbReference type="SUPFAM" id="SSF50129">
    <property type="entry name" value="GroES-like"/>
    <property type="match status" value="1"/>
</dbReference>
<dbReference type="PROSITE" id="PS00681">
    <property type="entry name" value="CHAPERONINS_CPN10"/>
    <property type="match status" value="1"/>
</dbReference>
<accession>P19422</accession>
<gene>
    <name evidence="1" type="primary">groES</name>
    <name evidence="1" type="synonym">groS</name>
    <name type="synonym">htpA</name>
    <name type="ordered locus">CBU_1719</name>
</gene>
<protein>
    <recommendedName>
        <fullName evidence="1">Co-chaperonin GroES</fullName>
    </recommendedName>
    <alternativeName>
        <fullName evidence="1">10 kDa chaperonin</fullName>
    </alternativeName>
    <alternativeName>
        <fullName evidence="1">Chaperonin-10</fullName>
        <shortName evidence="1">Cpn10</shortName>
    </alternativeName>
    <alternativeName>
        <fullName>Heat shock protein A</fullName>
    </alternativeName>
</protein>
<feature type="chain" id="PRO_0000174744" description="Co-chaperonin GroES">
    <location>
        <begin position="1"/>
        <end position="96"/>
    </location>
</feature>
<name>CH10_COXBU</name>
<proteinExistence type="inferred from homology"/>
<evidence type="ECO:0000255" key="1">
    <source>
        <dbReference type="HAMAP-Rule" id="MF_00580"/>
    </source>
</evidence>
<evidence type="ECO:0000305" key="2"/>
<keyword id="KW-0143">Chaperone</keyword>
<keyword id="KW-0963">Cytoplasm</keyword>
<keyword id="KW-1185">Reference proteome</keyword>
<keyword id="KW-0346">Stress response</keyword>
<organism>
    <name type="scientific">Coxiella burnetii (strain RSA 493 / Nine Mile phase I)</name>
    <dbReference type="NCBI Taxonomy" id="227377"/>
    <lineage>
        <taxon>Bacteria</taxon>
        <taxon>Pseudomonadati</taxon>
        <taxon>Pseudomonadota</taxon>
        <taxon>Gammaproteobacteria</taxon>
        <taxon>Legionellales</taxon>
        <taxon>Coxiellaceae</taxon>
        <taxon>Coxiella</taxon>
    </lineage>
</organism>
<comment type="function">
    <text evidence="1">Together with the chaperonin GroEL, plays an essential role in assisting protein folding. The GroEL-GroES system forms a nano-cage that allows encapsulation of the non-native substrate proteins and provides a physical environment optimized to promote and accelerate protein folding. GroES binds to the apical surface of the GroEL ring, thereby capping the opening of the GroEL channel.</text>
</comment>
<comment type="subunit">
    <text evidence="1">Heptamer of 7 subunits arranged in a ring. Interacts with the chaperonin GroEL.</text>
</comment>
<comment type="subcellular location">
    <subcellularLocation>
        <location evidence="1">Cytoplasm</location>
    </subcellularLocation>
</comment>
<comment type="similarity">
    <text evidence="1 2">Belongs to the GroES chaperonin family.</text>
</comment>
<comment type="sequence caution" evidence="2">
    <conflict type="erroneous initiation">
        <sequence resource="EMBL-CDS" id="AAO91214"/>
    </conflict>
</comment>